<feature type="chain" id="PRO_0000341707" description="2-succinyl-5-enolpyruvyl-6-hydroxy-3-cyclohexene-1-carboxylate synthase">
    <location>
        <begin position="1"/>
        <end position="584"/>
    </location>
</feature>
<proteinExistence type="inferred from homology"/>
<evidence type="ECO:0000255" key="1">
    <source>
        <dbReference type="HAMAP-Rule" id="MF_01659"/>
    </source>
</evidence>
<accession>Q632I2</accession>
<name>MEND_BACCZ</name>
<keyword id="KW-0460">Magnesium</keyword>
<keyword id="KW-0464">Manganese</keyword>
<keyword id="KW-0474">Menaquinone biosynthesis</keyword>
<keyword id="KW-0479">Metal-binding</keyword>
<keyword id="KW-0786">Thiamine pyrophosphate</keyword>
<keyword id="KW-0808">Transferase</keyword>
<comment type="function">
    <text evidence="1">Catalyzes the thiamine diphosphate-dependent decarboxylation of 2-oxoglutarate and the subsequent addition of the resulting succinic semialdehyde-thiamine pyrophosphate anion to isochorismate to yield 2-succinyl-5-enolpyruvyl-6-hydroxy-3-cyclohexene-1-carboxylate (SEPHCHC).</text>
</comment>
<comment type="catalytic activity">
    <reaction evidence="1">
        <text>isochorismate + 2-oxoglutarate + H(+) = 5-enolpyruvoyl-6-hydroxy-2-succinyl-cyclohex-3-ene-1-carboxylate + CO2</text>
        <dbReference type="Rhea" id="RHEA:25593"/>
        <dbReference type="ChEBI" id="CHEBI:15378"/>
        <dbReference type="ChEBI" id="CHEBI:16526"/>
        <dbReference type="ChEBI" id="CHEBI:16810"/>
        <dbReference type="ChEBI" id="CHEBI:29780"/>
        <dbReference type="ChEBI" id="CHEBI:58818"/>
        <dbReference type="EC" id="2.2.1.9"/>
    </reaction>
</comment>
<comment type="cofactor">
    <cofactor evidence="1">
        <name>Mg(2+)</name>
        <dbReference type="ChEBI" id="CHEBI:18420"/>
    </cofactor>
    <cofactor evidence="1">
        <name>Mn(2+)</name>
        <dbReference type="ChEBI" id="CHEBI:29035"/>
    </cofactor>
</comment>
<comment type="cofactor">
    <cofactor evidence="1">
        <name>thiamine diphosphate</name>
        <dbReference type="ChEBI" id="CHEBI:58937"/>
    </cofactor>
    <text evidence="1">Binds 1 thiamine pyrophosphate per subunit.</text>
</comment>
<comment type="pathway">
    <text evidence="1">Quinol/quinone metabolism; 1,4-dihydroxy-2-naphthoate biosynthesis; 1,4-dihydroxy-2-naphthoate from chorismate: step 2/7.</text>
</comment>
<comment type="pathway">
    <text evidence="1">Quinol/quinone metabolism; menaquinone biosynthesis.</text>
</comment>
<comment type="subunit">
    <text evidence="1">Homodimer.</text>
</comment>
<comment type="similarity">
    <text evidence="1">Belongs to the TPP enzyme family. MenD subfamily.</text>
</comment>
<organism>
    <name type="scientific">Bacillus cereus (strain ZK / E33L)</name>
    <dbReference type="NCBI Taxonomy" id="288681"/>
    <lineage>
        <taxon>Bacteria</taxon>
        <taxon>Bacillati</taxon>
        <taxon>Bacillota</taxon>
        <taxon>Bacilli</taxon>
        <taxon>Bacillales</taxon>
        <taxon>Bacillaceae</taxon>
        <taxon>Bacillus</taxon>
        <taxon>Bacillus cereus group</taxon>
    </lineage>
</organism>
<sequence length="584" mass="65055">MNNHIEALSYYLGAFVDELTRLNVCDVVISPGSRSTPIALLMEQHEGMNTYLHVDERSAGFFALGIAKAKKRPVALLCTSGTAAANYYPAVCEAFHSRVPLIVLTADRPHELRDVGAPQAMNQFNLYGTFVKQFTEMALPEASEAMYHYARMTTQRMIASACLAPQGPVHLNFPVREPLIPDFSLESLWDKGRGEYTGVVQQGNVVMPSEYVDSLVGRLSHMEKGLIICGDDSHSEIAAFATQLAEKTGYPILADPLSNIRSGHHDKTMVIDCYDTFLRNELLKETWKPDVLIRFGGMPVSKALTQFIKKQTKAVHIVVDESGQWRDPALVATEVVQASDIAFCSALIEKMPVMKKNDWFRMWQHINEKTKETLREMETYDTAFEGRVITDIVRVLPEGATLFASNSMPIRDTDSFFFTSDKNIQVMANRGVNGIDGIISTALGASIICDPLVLVIGDLSFYHDLNGLLAAKLHELNITIVVVNNDGGGIFSFLPQYEKKEHFESLFGTPIGLDYEHVVTMYGGSFSRVNGWEQFREEVQKGATTEGLHVVEICTNRDENLTLHRTLWAKTQDVITTSLQGESK</sequence>
<gene>
    <name evidence="1" type="primary">menD</name>
    <name type="ordered locus">BCE33L4610</name>
</gene>
<dbReference type="EC" id="2.2.1.9" evidence="1"/>
<dbReference type="EMBL" id="CP000001">
    <property type="protein sequence ID" value="AAU15663.1"/>
    <property type="molecule type" value="Genomic_DNA"/>
</dbReference>
<dbReference type="RefSeq" id="WP_001059218.1">
    <property type="nucleotide sequence ID" value="NC_006274.1"/>
</dbReference>
<dbReference type="SMR" id="Q632I2"/>
<dbReference type="KEGG" id="bcz:BCE33L4610"/>
<dbReference type="PATRIC" id="fig|288681.22.peg.752"/>
<dbReference type="UniPathway" id="UPA00079"/>
<dbReference type="UniPathway" id="UPA01057">
    <property type="reaction ID" value="UER00164"/>
</dbReference>
<dbReference type="Proteomes" id="UP000002612">
    <property type="component" value="Chromosome"/>
</dbReference>
<dbReference type="GO" id="GO:0070204">
    <property type="term" value="F:2-succinyl-5-enolpyruvyl-6-hydroxy-3-cyclohexene-1-carboxylic-acid synthase activity"/>
    <property type="evidence" value="ECO:0007669"/>
    <property type="project" value="UniProtKB-UniRule"/>
</dbReference>
<dbReference type="GO" id="GO:0000287">
    <property type="term" value="F:magnesium ion binding"/>
    <property type="evidence" value="ECO:0007669"/>
    <property type="project" value="UniProtKB-UniRule"/>
</dbReference>
<dbReference type="GO" id="GO:0030145">
    <property type="term" value="F:manganese ion binding"/>
    <property type="evidence" value="ECO:0007669"/>
    <property type="project" value="UniProtKB-UniRule"/>
</dbReference>
<dbReference type="GO" id="GO:0030976">
    <property type="term" value="F:thiamine pyrophosphate binding"/>
    <property type="evidence" value="ECO:0007669"/>
    <property type="project" value="UniProtKB-UniRule"/>
</dbReference>
<dbReference type="GO" id="GO:0009234">
    <property type="term" value="P:menaquinone biosynthetic process"/>
    <property type="evidence" value="ECO:0007669"/>
    <property type="project" value="UniProtKB-UniRule"/>
</dbReference>
<dbReference type="CDD" id="cd07037">
    <property type="entry name" value="TPP_PYR_MenD"/>
    <property type="match status" value="1"/>
</dbReference>
<dbReference type="CDD" id="cd02009">
    <property type="entry name" value="TPP_SHCHC_synthase"/>
    <property type="match status" value="1"/>
</dbReference>
<dbReference type="Gene3D" id="3.40.50.970">
    <property type="match status" value="2"/>
</dbReference>
<dbReference type="Gene3D" id="3.40.50.1220">
    <property type="entry name" value="TPP-binding domain"/>
    <property type="match status" value="1"/>
</dbReference>
<dbReference type="HAMAP" id="MF_01659">
    <property type="entry name" value="MenD"/>
    <property type="match status" value="1"/>
</dbReference>
<dbReference type="InterPro" id="IPR029035">
    <property type="entry name" value="DHS-like_NAD/FAD-binding_dom"/>
</dbReference>
<dbReference type="InterPro" id="IPR004433">
    <property type="entry name" value="MenaQ_synth_MenD"/>
</dbReference>
<dbReference type="InterPro" id="IPR032264">
    <property type="entry name" value="MenD_middle"/>
</dbReference>
<dbReference type="InterPro" id="IPR029061">
    <property type="entry name" value="THDP-binding"/>
</dbReference>
<dbReference type="InterPro" id="IPR012001">
    <property type="entry name" value="Thiamin_PyroP_enz_TPP-bd_dom"/>
</dbReference>
<dbReference type="InterPro" id="IPR011766">
    <property type="entry name" value="TPP_enzyme_TPP-bd"/>
</dbReference>
<dbReference type="NCBIfam" id="TIGR00173">
    <property type="entry name" value="menD"/>
    <property type="match status" value="1"/>
</dbReference>
<dbReference type="PANTHER" id="PTHR42916">
    <property type="entry name" value="2-SUCCINYL-5-ENOLPYRUVYL-6-HYDROXY-3-CYCLOHEXENE-1-CARBOXYLATE SYNTHASE"/>
    <property type="match status" value="1"/>
</dbReference>
<dbReference type="PANTHER" id="PTHR42916:SF1">
    <property type="entry name" value="PROTEIN PHYLLO, CHLOROPLASTIC"/>
    <property type="match status" value="1"/>
</dbReference>
<dbReference type="Pfam" id="PF02775">
    <property type="entry name" value="TPP_enzyme_C"/>
    <property type="match status" value="1"/>
</dbReference>
<dbReference type="Pfam" id="PF16582">
    <property type="entry name" value="TPP_enzyme_M_2"/>
    <property type="match status" value="1"/>
</dbReference>
<dbReference type="Pfam" id="PF02776">
    <property type="entry name" value="TPP_enzyme_N"/>
    <property type="match status" value="1"/>
</dbReference>
<dbReference type="PIRSF" id="PIRSF004983">
    <property type="entry name" value="MenD"/>
    <property type="match status" value="1"/>
</dbReference>
<dbReference type="SUPFAM" id="SSF52467">
    <property type="entry name" value="DHS-like NAD/FAD-binding domain"/>
    <property type="match status" value="1"/>
</dbReference>
<dbReference type="SUPFAM" id="SSF52518">
    <property type="entry name" value="Thiamin diphosphate-binding fold (THDP-binding)"/>
    <property type="match status" value="2"/>
</dbReference>
<protein>
    <recommendedName>
        <fullName evidence="1">2-succinyl-5-enolpyruvyl-6-hydroxy-3-cyclohexene-1-carboxylate synthase</fullName>
        <shortName evidence="1">SEPHCHC synthase</shortName>
        <ecNumber evidence="1">2.2.1.9</ecNumber>
    </recommendedName>
    <alternativeName>
        <fullName evidence="1">Menaquinone biosynthesis protein MenD</fullName>
    </alternativeName>
</protein>
<reference key="1">
    <citation type="journal article" date="2006" name="J. Bacteriol.">
        <title>Pathogenomic sequence analysis of Bacillus cereus and Bacillus thuringiensis isolates closely related to Bacillus anthracis.</title>
        <authorList>
            <person name="Han C.S."/>
            <person name="Xie G."/>
            <person name="Challacombe J.F."/>
            <person name="Altherr M.R."/>
            <person name="Bhotika S.S."/>
            <person name="Bruce D."/>
            <person name="Campbell C.S."/>
            <person name="Campbell M.L."/>
            <person name="Chen J."/>
            <person name="Chertkov O."/>
            <person name="Cleland C."/>
            <person name="Dimitrijevic M."/>
            <person name="Doggett N.A."/>
            <person name="Fawcett J.J."/>
            <person name="Glavina T."/>
            <person name="Goodwin L.A."/>
            <person name="Hill K.K."/>
            <person name="Hitchcock P."/>
            <person name="Jackson P.J."/>
            <person name="Keim P."/>
            <person name="Kewalramani A.R."/>
            <person name="Longmire J."/>
            <person name="Lucas S."/>
            <person name="Malfatti S."/>
            <person name="McMurry K."/>
            <person name="Meincke L.J."/>
            <person name="Misra M."/>
            <person name="Moseman B.L."/>
            <person name="Mundt M."/>
            <person name="Munk A.C."/>
            <person name="Okinaka R.T."/>
            <person name="Parson-Quintana B."/>
            <person name="Reilly L.P."/>
            <person name="Richardson P."/>
            <person name="Robinson D.L."/>
            <person name="Rubin E."/>
            <person name="Saunders E."/>
            <person name="Tapia R."/>
            <person name="Tesmer J.G."/>
            <person name="Thayer N."/>
            <person name="Thompson L.S."/>
            <person name="Tice H."/>
            <person name="Ticknor L.O."/>
            <person name="Wills P.L."/>
            <person name="Brettin T.S."/>
            <person name="Gilna P."/>
        </authorList>
    </citation>
    <scope>NUCLEOTIDE SEQUENCE [LARGE SCALE GENOMIC DNA]</scope>
    <source>
        <strain>ZK / E33L</strain>
    </source>
</reference>